<comment type="function">
    <text evidence="1">Multifunctional regulator of fatty acid metabolism.</text>
</comment>
<comment type="subunit">
    <text evidence="1">Homodimer.</text>
</comment>
<comment type="subcellular location">
    <subcellularLocation>
        <location evidence="1">Cytoplasm</location>
    </subcellularLocation>
</comment>
<dbReference type="EMBL" id="CP001127">
    <property type="protein sequence ID" value="ACF90615.1"/>
    <property type="molecule type" value="Genomic_DNA"/>
</dbReference>
<dbReference type="RefSeq" id="WP_000234826.1">
    <property type="nucleotide sequence ID" value="NC_011094.1"/>
</dbReference>
<dbReference type="SMR" id="B4TXX5"/>
<dbReference type="KEGG" id="sew:SeSA_A1947"/>
<dbReference type="HOGENOM" id="CLU_017584_9_4_6"/>
<dbReference type="Proteomes" id="UP000001865">
    <property type="component" value="Chromosome"/>
</dbReference>
<dbReference type="GO" id="GO:0005737">
    <property type="term" value="C:cytoplasm"/>
    <property type="evidence" value="ECO:0007669"/>
    <property type="project" value="UniProtKB-SubCell"/>
</dbReference>
<dbReference type="GO" id="GO:0003677">
    <property type="term" value="F:DNA binding"/>
    <property type="evidence" value="ECO:0007669"/>
    <property type="project" value="UniProtKB-KW"/>
</dbReference>
<dbReference type="GO" id="GO:0003700">
    <property type="term" value="F:DNA-binding transcription factor activity"/>
    <property type="evidence" value="ECO:0007669"/>
    <property type="project" value="UniProtKB-UniRule"/>
</dbReference>
<dbReference type="GO" id="GO:0000062">
    <property type="term" value="F:fatty-acyl-CoA binding"/>
    <property type="evidence" value="ECO:0007669"/>
    <property type="project" value="InterPro"/>
</dbReference>
<dbReference type="GO" id="GO:0006631">
    <property type="term" value="P:fatty acid metabolic process"/>
    <property type="evidence" value="ECO:0007669"/>
    <property type="project" value="UniProtKB-KW"/>
</dbReference>
<dbReference type="GO" id="GO:0019217">
    <property type="term" value="P:regulation of fatty acid metabolic process"/>
    <property type="evidence" value="ECO:0007669"/>
    <property type="project" value="UniProtKB-UniRule"/>
</dbReference>
<dbReference type="CDD" id="cd07377">
    <property type="entry name" value="WHTH_GntR"/>
    <property type="match status" value="1"/>
</dbReference>
<dbReference type="FunFam" id="1.10.10.10:FF:000036">
    <property type="entry name" value="Fatty acid metabolism regulator protein"/>
    <property type="match status" value="1"/>
</dbReference>
<dbReference type="FunFam" id="1.20.120.530:FF:000003">
    <property type="entry name" value="Fatty acid metabolism regulator protein"/>
    <property type="match status" value="1"/>
</dbReference>
<dbReference type="Gene3D" id="1.20.120.530">
    <property type="entry name" value="GntR ligand-binding domain-like"/>
    <property type="match status" value="1"/>
</dbReference>
<dbReference type="Gene3D" id="1.10.10.10">
    <property type="entry name" value="Winged helix-like DNA-binding domain superfamily/Winged helix DNA-binding domain"/>
    <property type="match status" value="1"/>
</dbReference>
<dbReference type="HAMAP" id="MF_00696">
    <property type="entry name" value="HTH_FadR"/>
    <property type="match status" value="1"/>
</dbReference>
<dbReference type="InterPro" id="IPR014178">
    <property type="entry name" value="FA-response_TF_FadR"/>
</dbReference>
<dbReference type="InterPro" id="IPR028374">
    <property type="entry name" value="FadR_C"/>
</dbReference>
<dbReference type="InterPro" id="IPR008920">
    <property type="entry name" value="TF_FadR/GntR_C"/>
</dbReference>
<dbReference type="InterPro" id="IPR000524">
    <property type="entry name" value="Tscrpt_reg_HTH_GntR"/>
</dbReference>
<dbReference type="InterPro" id="IPR036388">
    <property type="entry name" value="WH-like_DNA-bd_sf"/>
</dbReference>
<dbReference type="InterPro" id="IPR036390">
    <property type="entry name" value="WH_DNA-bd_sf"/>
</dbReference>
<dbReference type="NCBIfam" id="TIGR02812">
    <property type="entry name" value="fadR_gamma"/>
    <property type="match status" value="1"/>
</dbReference>
<dbReference type="NCBIfam" id="NF003444">
    <property type="entry name" value="PRK04984.1"/>
    <property type="match status" value="1"/>
</dbReference>
<dbReference type="PANTHER" id="PTHR43537:SF52">
    <property type="entry name" value="FATTY ACID METABOLISM REGULATOR PROTEIN"/>
    <property type="match status" value="1"/>
</dbReference>
<dbReference type="PANTHER" id="PTHR43537">
    <property type="entry name" value="TRANSCRIPTIONAL REGULATOR, GNTR FAMILY"/>
    <property type="match status" value="1"/>
</dbReference>
<dbReference type="Pfam" id="PF07840">
    <property type="entry name" value="FadR_C"/>
    <property type="match status" value="1"/>
</dbReference>
<dbReference type="Pfam" id="PF00392">
    <property type="entry name" value="GntR"/>
    <property type="match status" value="1"/>
</dbReference>
<dbReference type="PRINTS" id="PR00035">
    <property type="entry name" value="HTHGNTR"/>
</dbReference>
<dbReference type="SMART" id="SM00345">
    <property type="entry name" value="HTH_GNTR"/>
    <property type="match status" value="1"/>
</dbReference>
<dbReference type="SUPFAM" id="SSF48008">
    <property type="entry name" value="GntR ligand-binding domain-like"/>
    <property type="match status" value="1"/>
</dbReference>
<dbReference type="SUPFAM" id="SSF46785">
    <property type="entry name" value="Winged helix' DNA-binding domain"/>
    <property type="match status" value="1"/>
</dbReference>
<dbReference type="PROSITE" id="PS50949">
    <property type="entry name" value="HTH_GNTR"/>
    <property type="match status" value="1"/>
</dbReference>
<proteinExistence type="inferred from homology"/>
<gene>
    <name evidence="1" type="primary">fadR</name>
    <name type="ordered locus">SeSA_A1947</name>
</gene>
<organism>
    <name type="scientific">Salmonella schwarzengrund (strain CVM19633)</name>
    <dbReference type="NCBI Taxonomy" id="439843"/>
    <lineage>
        <taxon>Bacteria</taxon>
        <taxon>Pseudomonadati</taxon>
        <taxon>Pseudomonadota</taxon>
        <taxon>Gammaproteobacteria</taxon>
        <taxon>Enterobacterales</taxon>
        <taxon>Enterobacteriaceae</taxon>
        <taxon>Salmonella</taxon>
    </lineage>
</organism>
<evidence type="ECO:0000255" key="1">
    <source>
        <dbReference type="HAMAP-Rule" id="MF_00696"/>
    </source>
</evidence>
<protein>
    <recommendedName>
        <fullName evidence="1">Fatty acid metabolism regulator protein</fullName>
    </recommendedName>
</protein>
<keyword id="KW-0010">Activator</keyword>
<keyword id="KW-0963">Cytoplasm</keyword>
<keyword id="KW-0238">DNA-binding</keyword>
<keyword id="KW-0276">Fatty acid metabolism</keyword>
<keyword id="KW-0443">Lipid metabolism</keyword>
<keyword id="KW-0678">Repressor</keyword>
<keyword id="KW-0804">Transcription</keyword>
<keyword id="KW-0805">Transcription regulation</keyword>
<name>FADR_SALSV</name>
<feature type="chain" id="PRO_1000132331" description="Fatty acid metabolism regulator protein">
    <location>
        <begin position="1"/>
        <end position="239"/>
    </location>
</feature>
<feature type="domain" description="HTH gntR-type" evidence="1">
    <location>
        <begin position="6"/>
        <end position="74"/>
    </location>
</feature>
<feature type="DNA-binding region" description="H-T-H motif" evidence="1">
    <location>
        <begin position="34"/>
        <end position="53"/>
    </location>
</feature>
<reference key="1">
    <citation type="journal article" date="2011" name="J. Bacteriol.">
        <title>Comparative genomics of 28 Salmonella enterica isolates: evidence for CRISPR-mediated adaptive sublineage evolution.</title>
        <authorList>
            <person name="Fricke W.F."/>
            <person name="Mammel M.K."/>
            <person name="McDermott P.F."/>
            <person name="Tartera C."/>
            <person name="White D.G."/>
            <person name="Leclerc J.E."/>
            <person name="Ravel J."/>
            <person name="Cebula T.A."/>
        </authorList>
    </citation>
    <scope>NUCLEOTIDE SEQUENCE [LARGE SCALE GENOMIC DNA]</scope>
    <source>
        <strain>CVM19633</strain>
    </source>
</reference>
<accession>B4TXX5</accession>
<sequence>MVIKAQSPAGFAEEYIIESIWNNRFPPGTILPAERELSELIGVTRTTLREVLQRLARDGWLTIQHGKPTKVNNFWETSGLNILETLARLDHESVPQLIDNLLSVRTNISTIFIRTALRQHPDKAQEVLATAHEVADHADAFADLDYNIFRGLAFASGNPIYGLILNGMKGLYTRIGRHYFANPEARSLALGFYHKLSSLCEQGAHDQVYETVRRYGHDSGEIWHRMQKNLPGDLAIQGR</sequence>